<evidence type="ECO:0000255" key="1">
    <source>
        <dbReference type="HAMAP-Rule" id="MF_01405"/>
    </source>
</evidence>
<organism>
    <name type="scientific">Rhodopseudomonas palustris (strain ATCC BAA-98 / CGA009)</name>
    <dbReference type="NCBI Taxonomy" id="258594"/>
    <lineage>
        <taxon>Bacteria</taxon>
        <taxon>Pseudomonadati</taxon>
        <taxon>Pseudomonadota</taxon>
        <taxon>Alphaproteobacteria</taxon>
        <taxon>Hyphomicrobiales</taxon>
        <taxon>Nitrobacteraceae</taxon>
        <taxon>Rhodopseudomonas</taxon>
    </lineage>
</organism>
<keyword id="KW-0378">Hydrolase</keyword>
<keyword id="KW-0460">Magnesium</keyword>
<keyword id="KW-0479">Metal-binding</keyword>
<keyword id="KW-0546">Nucleotide metabolism</keyword>
<keyword id="KW-0547">Nucleotide-binding</keyword>
<sequence>MHRRITGKLVIATHNPGKLAEMRELLAPYGIEAISAGELGLAEPDETGDSFQANARIKAEAAAKAAQLPAFADDSGLAVDALDGAPGIYSARWAGDAKDFAGAMARIERLLQERGATAPERRTAHFVSALCVAWPDGHIEEVEARADGTLVWPPRGTAGFGYDPVFLPEGHSRTFGEMTSIEKHGLPPLGLGLSHRAKAFVKLAEICLAG</sequence>
<dbReference type="EC" id="3.6.1.66" evidence="1"/>
<dbReference type="EMBL" id="BX572594">
    <property type="protein sequence ID" value="CAE25772.1"/>
    <property type="molecule type" value="Genomic_DNA"/>
</dbReference>
<dbReference type="RefSeq" id="WP_011155896.1">
    <property type="nucleotide sequence ID" value="NZ_CP116810.1"/>
</dbReference>
<dbReference type="SMR" id="Q6NCY9"/>
<dbReference type="STRING" id="258594.RPA0328"/>
<dbReference type="GeneID" id="66891339"/>
<dbReference type="eggNOG" id="COG0127">
    <property type="taxonomic scope" value="Bacteria"/>
</dbReference>
<dbReference type="HOGENOM" id="CLU_082080_0_0_5"/>
<dbReference type="PhylomeDB" id="Q6NCY9"/>
<dbReference type="GO" id="GO:0005829">
    <property type="term" value="C:cytosol"/>
    <property type="evidence" value="ECO:0007669"/>
    <property type="project" value="TreeGrafter"/>
</dbReference>
<dbReference type="GO" id="GO:0035870">
    <property type="term" value="F:dITP diphosphatase activity"/>
    <property type="evidence" value="ECO:0007669"/>
    <property type="project" value="RHEA"/>
</dbReference>
<dbReference type="GO" id="GO:0036220">
    <property type="term" value="F:ITP diphosphatase activity"/>
    <property type="evidence" value="ECO:0007669"/>
    <property type="project" value="UniProtKB-EC"/>
</dbReference>
<dbReference type="GO" id="GO:0046872">
    <property type="term" value="F:metal ion binding"/>
    <property type="evidence" value="ECO:0007669"/>
    <property type="project" value="UniProtKB-KW"/>
</dbReference>
<dbReference type="GO" id="GO:0000166">
    <property type="term" value="F:nucleotide binding"/>
    <property type="evidence" value="ECO:0007669"/>
    <property type="project" value="UniProtKB-KW"/>
</dbReference>
<dbReference type="GO" id="GO:0017111">
    <property type="term" value="F:ribonucleoside triphosphate phosphatase activity"/>
    <property type="evidence" value="ECO:0007669"/>
    <property type="project" value="InterPro"/>
</dbReference>
<dbReference type="GO" id="GO:0036222">
    <property type="term" value="F:XTP diphosphatase activity"/>
    <property type="evidence" value="ECO:0007669"/>
    <property type="project" value="RHEA"/>
</dbReference>
<dbReference type="GO" id="GO:0009117">
    <property type="term" value="P:nucleotide metabolic process"/>
    <property type="evidence" value="ECO:0007669"/>
    <property type="project" value="UniProtKB-KW"/>
</dbReference>
<dbReference type="GO" id="GO:0009146">
    <property type="term" value="P:purine nucleoside triphosphate catabolic process"/>
    <property type="evidence" value="ECO:0007669"/>
    <property type="project" value="UniProtKB-UniRule"/>
</dbReference>
<dbReference type="CDD" id="cd00515">
    <property type="entry name" value="HAM1"/>
    <property type="match status" value="1"/>
</dbReference>
<dbReference type="FunFam" id="3.90.950.10:FF:000001">
    <property type="entry name" value="dITP/XTP pyrophosphatase"/>
    <property type="match status" value="1"/>
</dbReference>
<dbReference type="Gene3D" id="3.90.950.10">
    <property type="match status" value="1"/>
</dbReference>
<dbReference type="HAMAP" id="MF_01405">
    <property type="entry name" value="Non_canon_purine_NTPase"/>
    <property type="match status" value="1"/>
</dbReference>
<dbReference type="InterPro" id="IPR020922">
    <property type="entry name" value="dITP/XTP_pyrophosphatase"/>
</dbReference>
<dbReference type="InterPro" id="IPR029001">
    <property type="entry name" value="ITPase-like_fam"/>
</dbReference>
<dbReference type="InterPro" id="IPR002637">
    <property type="entry name" value="RdgB/HAM1"/>
</dbReference>
<dbReference type="NCBIfam" id="TIGR00042">
    <property type="entry name" value="RdgB/HAM1 family non-canonical purine NTP pyrophosphatase"/>
    <property type="match status" value="1"/>
</dbReference>
<dbReference type="PANTHER" id="PTHR11067:SF9">
    <property type="entry name" value="INOSINE TRIPHOSPHATE PYROPHOSPHATASE"/>
    <property type="match status" value="1"/>
</dbReference>
<dbReference type="PANTHER" id="PTHR11067">
    <property type="entry name" value="INOSINE TRIPHOSPHATE PYROPHOSPHATASE/HAM1 PROTEIN"/>
    <property type="match status" value="1"/>
</dbReference>
<dbReference type="Pfam" id="PF01725">
    <property type="entry name" value="Ham1p_like"/>
    <property type="match status" value="1"/>
</dbReference>
<dbReference type="SUPFAM" id="SSF52972">
    <property type="entry name" value="ITPase-like"/>
    <property type="match status" value="1"/>
</dbReference>
<reference key="1">
    <citation type="journal article" date="2004" name="Nat. Biotechnol.">
        <title>Complete genome sequence of the metabolically versatile photosynthetic bacterium Rhodopseudomonas palustris.</title>
        <authorList>
            <person name="Larimer F.W."/>
            <person name="Chain P."/>
            <person name="Hauser L."/>
            <person name="Lamerdin J.E."/>
            <person name="Malfatti S."/>
            <person name="Do L."/>
            <person name="Land M.L."/>
            <person name="Pelletier D.A."/>
            <person name="Beatty J.T."/>
            <person name="Lang A.S."/>
            <person name="Tabita F.R."/>
            <person name="Gibson J.L."/>
            <person name="Hanson T.E."/>
            <person name="Bobst C."/>
            <person name="Torres y Torres J.L."/>
            <person name="Peres C."/>
            <person name="Harrison F.H."/>
            <person name="Gibson J."/>
            <person name="Harwood C.S."/>
        </authorList>
    </citation>
    <scope>NUCLEOTIDE SEQUENCE [LARGE SCALE GENOMIC DNA]</scope>
    <source>
        <strain>ATCC BAA-98 / CGA009</strain>
    </source>
</reference>
<comment type="function">
    <text evidence="1">Pyrophosphatase that catalyzes the hydrolysis of nucleoside triphosphates to their monophosphate derivatives, with a high preference for the non-canonical purine nucleotides XTP (xanthosine triphosphate), dITP (deoxyinosine triphosphate) and ITP. Seems to function as a house-cleaning enzyme that removes non-canonical purine nucleotides from the nucleotide pool, thus preventing their incorporation into DNA/RNA and avoiding chromosomal lesions.</text>
</comment>
<comment type="catalytic activity">
    <reaction evidence="1">
        <text>XTP + H2O = XMP + diphosphate + H(+)</text>
        <dbReference type="Rhea" id="RHEA:28610"/>
        <dbReference type="ChEBI" id="CHEBI:15377"/>
        <dbReference type="ChEBI" id="CHEBI:15378"/>
        <dbReference type="ChEBI" id="CHEBI:33019"/>
        <dbReference type="ChEBI" id="CHEBI:57464"/>
        <dbReference type="ChEBI" id="CHEBI:61314"/>
        <dbReference type="EC" id="3.6.1.66"/>
    </reaction>
</comment>
<comment type="catalytic activity">
    <reaction evidence="1">
        <text>dITP + H2O = dIMP + diphosphate + H(+)</text>
        <dbReference type="Rhea" id="RHEA:28342"/>
        <dbReference type="ChEBI" id="CHEBI:15377"/>
        <dbReference type="ChEBI" id="CHEBI:15378"/>
        <dbReference type="ChEBI" id="CHEBI:33019"/>
        <dbReference type="ChEBI" id="CHEBI:61194"/>
        <dbReference type="ChEBI" id="CHEBI:61382"/>
        <dbReference type="EC" id="3.6.1.66"/>
    </reaction>
</comment>
<comment type="catalytic activity">
    <reaction evidence="1">
        <text>ITP + H2O = IMP + diphosphate + H(+)</text>
        <dbReference type="Rhea" id="RHEA:29399"/>
        <dbReference type="ChEBI" id="CHEBI:15377"/>
        <dbReference type="ChEBI" id="CHEBI:15378"/>
        <dbReference type="ChEBI" id="CHEBI:33019"/>
        <dbReference type="ChEBI" id="CHEBI:58053"/>
        <dbReference type="ChEBI" id="CHEBI:61402"/>
        <dbReference type="EC" id="3.6.1.66"/>
    </reaction>
</comment>
<comment type="cofactor">
    <cofactor evidence="1">
        <name>Mg(2+)</name>
        <dbReference type="ChEBI" id="CHEBI:18420"/>
    </cofactor>
    <text evidence="1">Binds 1 Mg(2+) ion per subunit.</text>
</comment>
<comment type="subunit">
    <text evidence="1">Homodimer.</text>
</comment>
<comment type="similarity">
    <text evidence="1">Belongs to the HAM1 NTPase family.</text>
</comment>
<proteinExistence type="inferred from homology"/>
<feature type="chain" id="PRO_0000178220" description="dITP/XTP pyrophosphatase">
    <location>
        <begin position="1"/>
        <end position="210"/>
    </location>
</feature>
<feature type="active site" description="Proton acceptor" evidence="1">
    <location>
        <position position="74"/>
    </location>
</feature>
<feature type="binding site" evidence="1">
    <location>
        <begin position="13"/>
        <end position="18"/>
    </location>
    <ligand>
        <name>substrate</name>
    </ligand>
</feature>
<feature type="binding site" evidence="1">
    <location>
        <position position="45"/>
    </location>
    <ligand>
        <name>Mg(2+)</name>
        <dbReference type="ChEBI" id="CHEBI:18420"/>
    </ligand>
</feature>
<feature type="binding site" evidence="1">
    <location>
        <position position="74"/>
    </location>
    <ligand>
        <name>Mg(2+)</name>
        <dbReference type="ChEBI" id="CHEBI:18420"/>
    </ligand>
</feature>
<feature type="binding site" evidence="1">
    <location>
        <position position="75"/>
    </location>
    <ligand>
        <name>substrate</name>
    </ligand>
</feature>
<feature type="binding site" evidence="1">
    <location>
        <begin position="160"/>
        <end position="163"/>
    </location>
    <ligand>
        <name>substrate</name>
    </ligand>
</feature>
<feature type="binding site" evidence="1">
    <location>
        <position position="183"/>
    </location>
    <ligand>
        <name>substrate</name>
    </ligand>
</feature>
<feature type="binding site" evidence="1">
    <location>
        <begin position="195"/>
        <end position="196"/>
    </location>
    <ligand>
        <name>substrate</name>
    </ligand>
</feature>
<accession>Q6NCY9</accession>
<protein>
    <recommendedName>
        <fullName evidence="1">dITP/XTP pyrophosphatase</fullName>
        <ecNumber evidence="1">3.6.1.66</ecNumber>
    </recommendedName>
    <alternativeName>
        <fullName evidence="1">Non-canonical purine NTP pyrophosphatase</fullName>
    </alternativeName>
    <alternativeName>
        <fullName evidence="1">Non-standard purine NTP pyrophosphatase</fullName>
    </alternativeName>
    <alternativeName>
        <fullName evidence="1">Nucleoside-triphosphate diphosphatase</fullName>
    </alternativeName>
    <alternativeName>
        <fullName evidence="1">Nucleoside-triphosphate pyrophosphatase</fullName>
        <shortName evidence="1">NTPase</shortName>
    </alternativeName>
</protein>
<gene>
    <name type="ordered locus">RPA0328</name>
</gene>
<name>IXTPA_RHOPA</name>